<dbReference type="EC" id="3.1.13.4"/>
<dbReference type="EMBL" id="AL137082">
    <property type="protein sequence ID" value="CAB68196.1"/>
    <property type="status" value="ALT_SEQ"/>
    <property type="molecule type" value="Genomic_DNA"/>
</dbReference>
<dbReference type="EMBL" id="CP002686">
    <property type="protein sequence ID" value="AEE79801.1"/>
    <property type="molecule type" value="Genomic_DNA"/>
</dbReference>
<dbReference type="EMBL" id="AK226830">
    <property type="status" value="NOT_ANNOTATED_CDS"/>
    <property type="molecule type" value="mRNA"/>
</dbReference>
<dbReference type="PIR" id="T45678">
    <property type="entry name" value="T45678"/>
</dbReference>
<dbReference type="RefSeq" id="NP_191417.2">
    <property type="nucleotide sequence ID" value="NM_115720.3"/>
</dbReference>
<dbReference type="SMR" id="Q9M2F8"/>
<dbReference type="FunCoup" id="Q9M2F8">
    <property type="interactions" value="4237"/>
</dbReference>
<dbReference type="STRING" id="3702.Q9M2F8"/>
<dbReference type="iPTMnet" id="Q9M2F8"/>
<dbReference type="PaxDb" id="3702-AT3G58580.1"/>
<dbReference type="ProteomicsDB" id="223894"/>
<dbReference type="EnsemblPlants" id="AT3G58580.1">
    <property type="protein sequence ID" value="AT3G58580.1"/>
    <property type="gene ID" value="AT3G58580"/>
</dbReference>
<dbReference type="GeneID" id="825027"/>
<dbReference type="Gramene" id="AT3G58580.1">
    <property type="protein sequence ID" value="AT3G58580.1"/>
    <property type="gene ID" value="AT3G58580"/>
</dbReference>
<dbReference type="KEGG" id="ath:AT3G58580"/>
<dbReference type="Araport" id="AT3G58580"/>
<dbReference type="TAIR" id="AT3G58580">
    <property type="gene designation" value="ATCCR4B"/>
</dbReference>
<dbReference type="eggNOG" id="KOG0620">
    <property type="taxonomic scope" value="Eukaryota"/>
</dbReference>
<dbReference type="HOGENOM" id="CLU_016428_5_0_1"/>
<dbReference type="InParanoid" id="Q9M2F8"/>
<dbReference type="OMA" id="CDSYATS"/>
<dbReference type="OrthoDB" id="428734at2759"/>
<dbReference type="PhylomeDB" id="Q9M2F8"/>
<dbReference type="PRO" id="PR:Q9M2F8"/>
<dbReference type="Proteomes" id="UP000006548">
    <property type="component" value="Chromosome 3"/>
</dbReference>
<dbReference type="ExpressionAtlas" id="Q9M2F8">
    <property type="expression patterns" value="baseline and differential"/>
</dbReference>
<dbReference type="GO" id="GO:0005737">
    <property type="term" value="C:cytoplasm"/>
    <property type="evidence" value="ECO:0007669"/>
    <property type="project" value="UniProtKB-SubCell"/>
</dbReference>
<dbReference type="GO" id="GO:0005634">
    <property type="term" value="C:nucleus"/>
    <property type="evidence" value="ECO:0007669"/>
    <property type="project" value="UniProtKB-SubCell"/>
</dbReference>
<dbReference type="GO" id="GO:0046872">
    <property type="term" value="F:metal ion binding"/>
    <property type="evidence" value="ECO:0007669"/>
    <property type="project" value="UniProtKB-KW"/>
</dbReference>
<dbReference type="GO" id="GO:0004535">
    <property type="term" value="F:poly(A)-specific ribonuclease activity"/>
    <property type="evidence" value="ECO:0007669"/>
    <property type="project" value="UniProtKB-EC"/>
</dbReference>
<dbReference type="GO" id="GO:0003723">
    <property type="term" value="F:RNA binding"/>
    <property type="evidence" value="ECO:0007669"/>
    <property type="project" value="UniProtKB-KW"/>
</dbReference>
<dbReference type="CDD" id="cd09097">
    <property type="entry name" value="Deadenylase_CCR4"/>
    <property type="match status" value="1"/>
</dbReference>
<dbReference type="FunFam" id="3.60.10.10:FF:000016">
    <property type="entry name" value="Carbon catabolite repressor protein 4 1"/>
    <property type="match status" value="1"/>
</dbReference>
<dbReference type="Gene3D" id="3.60.10.10">
    <property type="entry name" value="Endonuclease/exonuclease/phosphatase"/>
    <property type="match status" value="1"/>
</dbReference>
<dbReference type="InterPro" id="IPR050410">
    <property type="entry name" value="CCR4/nocturin_mRNA_transcr"/>
</dbReference>
<dbReference type="InterPro" id="IPR036691">
    <property type="entry name" value="Endo/exonu/phosph_ase_sf"/>
</dbReference>
<dbReference type="InterPro" id="IPR005135">
    <property type="entry name" value="Endo/exonuclease/phosphatase"/>
</dbReference>
<dbReference type="PANTHER" id="PTHR12121">
    <property type="entry name" value="CARBON CATABOLITE REPRESSOR PROTEIN 4"/>
    <property type="match status" value="1"/>
</dbReference>
<dbReference type="PANTHER" id="PTHR12121:SF78">
    <property type="entry name" value="CARBON CATABOLITE REPRESSOR PROTEIN 4 HOMOLOG 2"/>
    <property type="match status" value="1"/>
</dbReference>
<dbReference type="Pfam" id="PF03372">
    <property type="entry name" value="Exo_endo_phos"/>
    <property type="match status" value="1"/>
</dbReference>
<dbReference type="SUPFAM" id="SSF56219">
    <property type="entry name" value="DNase I-like"/>
    <property type="match status" value="1"/>
</dbReference>
<proteinExistence type="evidence at transcript level"/>
<keyword id="KW-0963">Cytoplasm</keyword>
<keyword id="KW-0269">Exonuclease</keyword>
<keyword id="KW-0378">Hydrolase</keyword>
<keyword id="KW-0460">Magnesium</keyword>
<keyword id="KW-0479">Metal-binding</keyword>
<keyword id="KW-0540">Nuclease</keyword>
<keyword id="KW-0539">Nucleus</keyword>
<keyword id="KW-1185">Reference proteome</keyword>
<keyword id="KW-0677">Repeat</keyword>
<keyword id="KW-0694">RNA-binding</keyword>
<keyword id="KW-0804">Transcription</keyword>
<keyword id="KW-0805">Transcription regulation</keyword>
<gene>
    <name type="primary">CCR4-2</name>
    <name type="ordered locus">At3g58580</name>
    <name type="ORF">F14P22.170</name>
</gene>
<accession>Q9M2F8</accession>
<feature type="chain" id="PRO_0000355045" description="Carbon catabolite repressor protein 4 homolog 2">
    <location>
        <begin position="1"/>
        <end position="603"/>
    </location>
</feature>
<feature type="region of interest" description="Disordered" evidence="3">
    <location>
        <begin position="115"/>
        <end position="136"/>
    </location>
</feature>
<feature type="compositionally biased region" description="Low complexity" evidence="3">
    <location>
        <begin position="126"/>
        <end position="136"/>
    </location>
</feature>
<feature type="binding site" evidence="2">
    <location>
        <position position="302"/>
    </location>
    <ligand>
        <name>Mg(2+)</name>
        <dbReference type="ChEBI" id="CHEBI:18420"/>
    </ligand>
</feature>
<reference key="1">
    <citation type="journal article" date="2000" name="Nature">
        <title>Sequence and analysis of chromosome 3 of the plant Arabidopsis thaliana.</title>
        <authorList>
            <person name="Salanoubat M."/>
            <person name="Lemcke K."/>
            <person name="Rieger M."/>
            <person name="Ansorge W."/>
            <person name="Unseld M."/>
            <person name="Fartmann B."/>
            <person name="Valle G."/>
            <person name="Bloecker H."/>
            <person name="Perez-Alonso M."/>
            <person name="Obermaier B."/>
            <person name="Delseny M."/>
            <person name="Boutry M."/>
            <person name="Grivell L.A."/>
            <person name="Mache R."/>
            <person name="Puigdomenech P."/>
            <person name="De Simone V."/>
            <person name="Choisne N."/>
            <person name="Artiguenave F."/>
            <person name="Robert C."/>
            <person name="Brottier P."/>
            <person name="Wincker P."/>
            <person name="Cattolico L."/>
            <person name="Weissenbach J."/>
            <person name="Saurin W."/>
            <person name="Quetier F."/>
            <person name="Schaefer M."/>
            <person name="Mueller-Auer S."/>
            <person name="Gabel C."/>
            <person name="Fuchs M."/>
            <person name="Benes V."/>
            <person name="Wurmbach E."/>
            <person name="Drzonek H."/>
            <person name="Erfle H."/>
            <person name="Jordan N."/>
            <person name="Bangert S."/>
            <person name="Wiedelmann R."/>
            <person name="Kranz H."/>
            <person name="Voss H."/>
            <person name="Holland R."/>
            <person name="Brandt P."/>
            <person name="Nyakatura G."/>
            <person name="Vezzi A."/>
            <person name="D'Angelo M."/>
            <person name="Pallavicini A."/>
            <person name="Toppo S."/>
            <person name="Simionati B."/>
            <person name="Conrad A."/>
            <person name="Hornischer K."/>
            <person name="Kauer G."/>
            <person name="Loehnert T.-H."/>
            <person name="Nordsiek G."/>
            <person name="Reichelt J."/>
            <person name="Scharfe M."/>
            <person name="Schoen O."/>
            <person name="Bargues M."/>
            <person name="Terol J."/>
            <person name="Climent J."/>
            <person name="Navarro P."/>
            <person name="Collado C."/>
            <person name="Perez-Perez A."/>
            <person name="Ottenwaelder B."/>
            <person name="Duchemin D."/>
            <person name="Cooke R."/>
            <person name="Laudie M."/>
            <person name="Berger-Llauro C."/>
            <person name="Purnelle B."/>
            <person name="Masuy D."/>
            <person name="de Haan M."/>
            <person name="Maarse A.C."/>
            <person name="Alcaraz J.-P."/>
            <person name="Cottet A."/>
            <person name="Casacuberta E."/>
            <person name="Monfort A."/>
            <person name="Argiriou A."/>
            <person name="Flores M."/>
            <person name="Liguori R."/>
            <person name="Vitale D."/>
            <person name="Mannhaupt G."/>
            <person name="Haase D."/>
            <person name="Schoof H."/>
            <person name="Rudd S."/>
            <person name="Zaccaria P."/>
            <person name="Mewes H.-W."/>
            <person name="Mayer K.F.X."/>
            <person name="Kaul S."/>
            <person name="Town C.D."/>
            <person name="Koo H.L."/>
            <person name="Tallon L.J."/>
            <person name="Jenkins J."/>
            <person name="Rooney T."/>
            <person name="Rizzo M."/>
            <person name="Walts A."/>
            <person name="Utterback T."/>
            <person name="Fujii C.Y."/>
            <person name="Shea T.P."/>
            <person name="Creasy T.H."/>
            <person name="Haas B."/>
            <person name="Maiti R."/>
            <person name="Wu D."/>
            <person name="Peterson J."/>
            <person name="Van Aken S."/>
            <person name="Pai G."/>
            <person name="Militscher J."/>
            <person name="Sellers P."/>
            <person name="Gill J.E."/>
            <person name="Feldblyum T.V."/>
            <person name="Preuss D."/>
            <person name="Lin X."/>
            <person name="Nierman W.C."/>
            <person name="Salzberg S.L."/>
            <person name="White O."/>
            <person name="Venter J.C."/>
            <person name="Fraser C.M."/>
            <person name="Kaneko T."/>
            <person name="Nakamura Y."/>
            <person name="Sato S."/>
            <person name="Kato T."/>
            <person name="Asamizu E."/>
            <person name="Sasamoto S."/>
            <person name="Kimura T."/>
            <person name="Idesawa K."/>
            <person name="Kawashima K."/>
            <person name="Kishida Y."/>
            <person name="Kiyokawa C."/>
            <person name="Kohara M."/>
            <person name="Matsumoto M."/>
            <person name="Matsuno A."/>
            <person name="Muraki A."/>
            <person name="Nakayama S."/>
            <person name="Nakazaki N."/>
            <person name="Shinpo S."/>
            <person name="Takeuchi C."/>
            <person name="Wada T."/>
            <person name="Watanabe A."/>
            <person name="Yamada M."/>
            <person name="Yasuda M."/>
            <person name="Tabata S."/>
        </authorList>
    </citation>
    <scope>NUCLEOTIDE SEQUENCE [LARGE SCALE GENOMIC DNA]</scope>
    <source>
        <strain>cv. Columbia</strain>
    </source>
</reference>
<reference key="2">
    <citation type="journal article" date="2017" name="Plant J.">
        <title>Araport11: a complete reannotation of the Arabidopsis thaliana reference genome.</title>
        <authorList>
            <person name="Cheng C.Y."/>
            <person name="Krishnakumar V."/>
            <person name="Chan A.P."/>
            <person name="Thibaud-Nissen F."/>
            <person name="Schobel S."/>
            <person name="Town C.D."/>
        </authorList>
    </citation>
    <scope>GENOME REANNOTATION</scope>
    <source>
        <strain>cv. Columbia</strain>
    </source>
</reference>
<reference key="3">
    <citation type="submission" date="2006-07" db="EMBL/GenBank/DDBJ databases">
        <title>Large-scale analysis of RIKEN Arabidopsis full-length (RAFL) cDNAs.</title>
        <authorList>
            <person name="Totoki Y."/>
            <person name="Seki M."/>
            <person name="Ishida J."/>
            <person name="Nakajima M."/>
            <person name="Enju A."/>
            <person name="Kamiya A."/>
            <person name="Narusaka M."/>
            <person name="Shin-i T."/>
            <person name="Nakagawa M."/>
            <person name="Sakamoto N."/>
            <person name="Oishi K."/>
            <person name="Kohara Y."/>
            <person name="Kobayashi M."/>
            <person name="Toyoda A."/>
            <person name="Sakaki Y."/>
            <person name="Sakurai T."/>
            <person name="Iida K."/>
            <person name="Akiyama K."/>
            <person name="Satou M."/>
            <person name="Toyoda T."/>
            <person name="Konagaya A."/>
            <person name="Carninci P."/>
            <person name="Kawai J."/>
            <person name="Hayashizaki Y."/>
            <person name="Shinozaki K."/>
        </authorList>
    </citation>
    <scope>NUCLEOTIDE SEQUENCE [LARGE SCALE MRNA]</scope>
    <source>
        <strain>cv. Columbia</strain>
    </source>
</reference>
<sequence>MLSVIRVHLPSEIPIVGCELTPYVLVRRPDKNSTTDDVPESAPLEGYFLRYRWYRVQSDKKVTICSVHPTEQATLQCVFCSKRRSLVPKSYHCSPKCFTDAWQHHRTLHERAAAENNANEDDDLNRNNSAGSGSLAGSLSGSMSNLSIANNGPAPFYPSNITQKNGGETLVEVGGCKTYTPTADDISHVLKFECVVANAETKQIVGHPSTILTSRVIPAPSPSPRKLIPVNGADGMGHLDQDARIQSAGSFTVLSYNILSDTSASSDLYSYCPPWALSWPYRRQNLLREIVGYRADVVCLQEVQSDHFHEIFAPELDKHGYQALYKRKTNEVLSGSTSAIDGCATFFRRDRFSHVKKYDVEFNKAAQSLTDALIPQAQKRTALNRLVKDNIALIVVLEAKFGNQPTDPSGKRQLICVANTHVNVQQDLKDVKLWQVHTLLKGLEKIAASADIPMLVCGDFNTLPGSAPHTLLVMGKVDPMHPDLAVDPLNILRPHTKLTHQLPLVSAYSSFVRKGIMGLGLEQHRRRIDLNTNEPLFTNCTRDFIGTHDYIFYTADTLMVESLLELLDEDGLRKDTALPSPEWSSNHIALLAEFRCTPRTRRG</sequence>
<protein>
    <recommendedName>
        <fullName>Carbon catabolite repressor protein 4 homolog 2</fullName>
        <shortName>CCR4 homolog 2</shortName>
        <ecNumber>3.1.13.4</ecNumber>
    </recommendedName>
</protein>
<evidence type="ECO:0000250" key="1"/>
<evidence type="ECO:0000250" key="2">
    <source>
        <dbReference type="UniProtKB" id="O95551"/>
    </source>
</evidence>
<evidence type="ECO:0000256" key="3">
    <source>
        <dbReference type="SAM" id="MobiDB-lite"/>
    </source>
</evidence>
<evidence type="ECO:0000305" key="4"/>
<organism>
    <name type="scientific">Arabidopsis thaliana</name>
    <name type="common">Mouse-ear cress</name>
    <dbReference type="NCBI Taxonomy" id="3702"/>
    <lineage>
        <taxon>Eukaryota</taxon>
        <taxon>Viridiplantae</taxon>
        <taxon>Streptophyta</taxon>
        <taxon>Embryophyta</taxon>
        <taxon>Tracheophyta</taxon>
        <taxon>Spermatophyta</taxon>
        <taxon>Magnoliopsida</taxon>
        <taxon>eudicotyledons</taxon>
        <taxon>Gunneridae</taxon>
        <taxon>Pentapetalae</taxon>
        <taxon>rosids</taxon>
        <taxon>malvids</taxon>
        <taxon>Brassicales</taxon>
        <taxon>Brassicaceae</taxon>
        <taxon>Camelineae</taxon>
        <taxon>Arabidopsis</taxon>
    </lineage>
</organism>
<name>CCR4B_ARATH</name>
<comment type="function">
    <text evidence="1">Acts as a catalytic component of the CCR4-NOT core complex, which in the nucleus seems to be a general transcription factor, and in the cytoplasm the major mRNA deadenylase involved in mRNA turnover.</text>
</comment>
<comment type="catalytic activity">
    <reaction>
        <text>Exonucleolytic cleavage of poly(A) to 5'-AMP.</text>
        <dbReference type="EC" id="3.1.13.4"/>
    </reaction>
</comment>
<comment type="cofactor">
    <cofactor evidence="1">
        <name>Mg(2+)</name>
        <dbReference type="ChEBI" id="CHEBI:18420"/>
    </cofactor>
</comment>
<comment type="subunit">
    <text evidence="1">Component of the CCR4-NOT complex, at least composed of CRR4 and CAF1 proteins.</text>
</comment>
<comment type="subcellular location">
    <subcellularLocation>
        <location evidence="1">Nucleus</location>
    </subcellularLocation>
    <subcellularLocation>
        <location evidence="1">Cytoplasm</location>
    </subcellularLocation>
</comment>
<comment type="similarity">
    <text evidence="4">Belongs to the CCR4/nocturin family.</text>
</comment>
<comment type="sequence caution" evidence="4">
    <conflict type="frameshift">
        <sequence resource="EMBL" id="AK226830"/>
    </conflict>
</comment>
<comment type="sequence caution" evidence="4">
    <conflict type="erroneous gene model prediction">
        <sequence resource="EMBL-CDS" id="CAB68196"/>
    </conflict>
</comment>